<evidence type="ECO:0000250" key="1"/>
<evidence type="ECO:0000250" key="2">
    <source>
        <dbReference type="UniProtKB" id="Q86PC9"/>
    </source>
</evidence>
<evidence type="ECO:0000255" key="3"/>
<evidence type="ECO:0000256" key="4">
    <source>
        <dbReference type="SAM" id="MobiDB-lite"/>
    </source>
</evidence>
<name>TULP_DROPS</name>
<organism>
    <name type="scientific">Drosophila pseudoobscura pseudoobscura</name>
    <name type="common">Fruit fly</name>
    <dbReference type="NCBI Taxonomy" id="46245"/>
    <lineage>
        <taxon>Eukaryota</taxon>
        <taxon>Metazoa</taxon>
        <taxon>Ecdysozoa</taxon>
        <taxon>Arthropoda</taxon>
        <taxon>Hexapoda</taxon>
        <taxon>Insecta</taxon>
        <taxon>Pterygota</taxon>
        <taxon>Neoptera</taxon>
        <taxon>Endopterygota</taxon>
        <taxon>Diptera</taxon>
        <taxon>Brachycera</taxon>
        <taxon>Muscomorpha</taxon>
        <taxon>Ephydroidea</taxon>
        <taxon>Drosophilidae</taxon>
        <taxon>Drosophila</taxon>
        <taxon>Sophophora</taxon>
    </lineage>
</organism>
<feature type="chain" id="PRO_0000400841" description="Protein king tubby">
    <location>
        <begin position="1"/>
        <end position="456"/>
    </location>
</feature>
<feature type="region of interest" description="Disordered" evidence="4">
    <location>
        <begin position="111"/>
        <end position="202"/>
    </location>
</feature>
<feature type="compositionally biased region" description="Polar residues" evidence="4">
    <location>
        <begin position="120"/>
        <end position="152"/>
    </location>
</feature>
<feature type="modified residue" description="Phosphoserine" evidence="1">
    <location>
        <position position="149"/>
    </location>
</feature>
<comment type="subcellular location">
    <subcellularLocation>
        <location evidence="2">Cytoplasm</location>
    </subcellularLocation>
    <subcellularLocation>
        <location evidence="2">Nucleus</location>
    </subcellularLocation>
    <subcellularLocation>
        <location evidence="2">Cell projection</location>
        <location evidence="2">Cilium membrane</location>
        <topology evidence="2">Peripheral membrane protein</topology>
    </subcellularLocation>
    <subcellularLocation>
        <location evidence="2">Cell projection</location>
        <location evidence="2">Rhabdomere</location>
    </subcellularLocation>
</comment>
<comment type="similarity">
    <text evidence="3">Belongs to the TUB family.</text>
</comment>
<reference key="1">
    <citation type="journal article" date="2005" name="Genome Res.">
        <title>Comparative genome sequencing of Drosophila pseudoobscura: chromosomal, gene, and cis-element evolution.</title>
        <authorList>
            <person name="Richards S."/>
            <person name="Liu Y."/>
            <person name="Bettencourt B.R."/>
            <person name="Hradecky P."/>
            <person name="Letovsky S."/>
            <person name="Nielsen R."/>
            <person name="Thornton K."/>
            <person name="Hubisz M.J."/>
            <person name="Chen R."/>
            <person name="Meisel R.P."/>
            <person name="Couronne O."/>
            <person name="Hua S."/>
            <person name="Smith M.A."/>
            <person name="Zhang P."/>
            <person name="Liu J."/>
            <person name="Bussemaker H.J."/>
            <person name="van Batenburg M.F."/>
            <person name="Howells S.L."/>
            <person name="Scherer S.E."/>
            <person name="Sodergren E."/>
            <person name="Matthews B.B."/>
            <person name="Crosby M.A."/>
            <person name="Schroeder A.J."/>
            <person name="Ortiz-Barrientos D."/>
            <person name="Rives C.M."/>
            <person name="Metzker M.L."/>
            <person name="Muzny D.M."/>
            <person name="Scott G."/>
            <person name="Steffen D."/>
            <person name="Wheeler D.A."/>
            <person name="Worley K.C."/>
            <person name="Havlak P."/>
            <person name="Durbin K.J."/>
            <person name="Egan A."/>
            <person name="Gill R."/>
            <person name="Hume J."/>
            <person name="Morgan M.B."/>
            <person name="Miner G."/>
            <person name="Hamilton C."/>
            <person name="Huang Y."/>
            <person name="Waldron L."/>
            <person name="Verduzco D."/>
            <person name="Clerc-Blankenburg K.P."/>
            <person name="Dubchak I."/>
            <person name="Noor M.A.F."/>
            <person name="Anderson W."/>
            <person name="White K.P."/>
            <person name="Clark A.G."/>
            <person name="Schaeffer S.W."/>
            <person name="Gelbart W.M."/>
            <person name="Weinstock G.M."/>
            <person name="Gibbs R.A."/>
        </authorList>
    </citation>
    <scope>NUCLEOTIDE SEQUENCE [LARGE SCALE GENOMIC DNA]</scope>
    <source>
        <strain>MV2-25 / Tucson 14011-0121.94</strain>
    </source>
</reference>
<dbReference type="EMBL" id="CM000071">
    <property type="protein sequence ID" value="EAL26498.3"/>
    <property type="molecule type" value="Genomic_DNA"/>
</dbReference>
<dbReference type="SMR" id="Q28X18"/>
<dbReference type="FunCoup" id="Q28X18">
    <property type="interactions" value="212"/>
</dbReference>
<dbReference type="STRING" id="46245.Q28X18"/>
<dbReference type="eggNOG" id="KOG2502">
    <property type="taxonomic scope" value="Eukaryota"/>
</dbReference>
<dbReference type="HOGENOM" id="CLU_028236_1_1_1"/>
<dbReference type="InParanoid" id="Q28X18"/>
<dbReference type="OMA" id="GYDGPMQ"/>
<dbReference type="ChiTaRS" id="ktub">
    <property type="organism name" value="fly"/>
</dbReference>
<dbReference type="Proteomes" id="UP000001819">
    <property type="component" value="Unplaced"/>
</dbReference>
<dbReference type="GO" id="GO:0060170">
    <property type="term" value="C:ciliary membrane"/>
    <property type="evidence" value="ECO:0007669"/>
    <property type="project" value="UniProtKB-SubCell"/>
</dbReference>
<dbReference type="GO" id="GO:0005737">
    <property type="term" value="C:cytoplasm"/>
    <property type="evidence" value="ECO:0000250"/>
    <property type="project" value="UniProtKB"/>
</dbReference>
<dbReference type="GO" id="GO:0005634">
    <property type="term" value="C:nucleus"/>
    <property type="evidence" value="ECO:0000250"/>
    <property type="project" value="UniProtKB"/>
</dbReference>
<dbReference type="GO" id="GO:0016028">
    <property type="term" value="C:rhabdomere"/>
    <property type="evidence" value="ECO:0007669"/>
    <property type="project" value="UniProtKB-SubCell"/>
</dbReference>
<dbReference type="GO" id="GO:0061512">
    <property type="term" value="P:protein localization to cilium"/>
    <property type="evidence" value="ECO:0007669"/>
    <property type="project" value="TreeGrafter"/>
</dbReference>
<dbReference type="FunFam" id="3.20.90.10:FF:000001">
    <property type="entry name" value="Tubby-like protein"/>
    <property type="match status" value="1"/>
</dbReference>
<dbReference type="Gene3D" id="3.20.90.10">
    <property type="entry name" value="Tubby Protein, Chain A"/>
    <property type="match status" value="1"/>
</dbReference>
<dbReference type="InterPro" id="IPR025659">
    <property type="entry name" value="Tubby-like_C"/>
</dbReference>
<dbReference type="InterPro" id="IPR000007">
    <property type="entry name" value="Tubby_C"/>
</dbReference>
<dbReference type="InterPro" id="IPR018066">
    <property type="entry name" value="Tubby_C_CS"/>
</dbReference>
<dbReference type="PANTHER" id="PTHR16517:SF7">
    <property type="entry name" value="PROTEIN KING TUBBY"/>
    <property type="match status" value="1"/>
</dbReference>
<dbReference type="PANTHER" id="PTHR16517">
    <property type="entry name" value="TUBBY-RELATED"/>
    <property type="match status" value="1"/>
</dbReference>
<dbReference type="Pfam" id="PF01167">
    <property type="entry name" value="Tub"/>
    <property type="match status" value="1"/>
</dbReference>
<dbReference type="PRINTS" id="PR01573">
    <property type="entry name" value="SUPERTUBBY"/>
</dbReference>
<dbReference type="SUPFAM" id="SSF54518">
    <property type="entry name" value="Tubby C-terminal domain-like"/>
    <property type="match status" value="1"/>
</dbReference>
<dbReference type="PROSITE" id="PS01200">
    <property type="entry name" value="TUB_1"/>
    <property type="match status" value="1"/>
</dbReference>
<dbReference type="PROSITE" id="PS01201">
    <property type="entry name" value="TUB_2"/>
    <property type="match status" value="1"/>
</dbReference>
<protein>
    <recommendedName>
        <fullName evidence="2">Protein king tubby</fullName>
    </recommendedName>
</protein>
<accession>Q28X18</accession>
<proteinExistence type="inferred from homology"/>
<gene>
    <name evidence="2" type="primary">king-tubby</name>
    <name type="ORF">GA21760</name>
</gene>
<keyword id="KW-1003">Cell membrane</keyword>
<keyword id="KW-0966">Cell projection</keyword>
<keyword id="KW-0963">Cytoplasm</keyword>
<keyword id="KW-0472">Membrane</keyword>
<keyword id="KW-0539">Nucleus</keyword>
<keyword id="KW-0597">Phosphoprotein</keyword>
<keyword id="KW-1185">Reference proteome</keyword>
<sequence length="456" mass="50690">MCKLPFSKSRMRQLMEAYIRQKRASPGMVQASDLQISRPMSGMRSNSRELHAYDGPMQFISSPLNPDQILTNGSPVGGTVAMNSTRNHSNNMRTLSTISQEADLIEEISSHELEDEESSPVTVIEQQQTAPHSANSTHSQRPSTTRQPSFNDTLDEDDYTNRNIAGAAPVRPVGLASSPYKEAGLDGSSMETSNGAGGESEGDVIGNIDQFVMQPAPQGVLYKCRITRDRKGMDRGLFPIYYLHLERDYGKKIFLLGGRKRKKSKTSNYIVSCDPTDLSRSADGFCGKLRSNVFGTSFTVFDSGNKDSTDSPRLDLAVIIYDTNILGFKGPRNMTVILPGMTEDDQRVKISSADPKQTGILDLYKMKNMDNIVELHNKTPVWNDETQSYVLNFHGRVTQASVKNFQLVHDSDPEYIVMQFGRTSEDVFTMDYRYPLCAMQAFAIALSSFDGKIACE</sequence>